<comment type="catalytic activity">
    <reaction evidence="1">
        <text>thymidine + ATP = dTMP + ADP + H(+)</text>
        <dbReference type="Rhea" id="RHEA:19129"/>
        <dbReference type="ChEBI" id="CHEBI:15378"/>
        <dbReference type="ChEBI" id="CHEBI:17748"/>
        <dbReference type="ChEBI" id="CHEBI:30616"/>
        <dbReference type="ChEBI" id="CHEBI:63528"/>
        <dbReference type="ChEBI" id="CHEBI:456216"/>
        <dbReference type="EC" id="2.7.1.21"/>
    </reaction>
</comment>
<comment type="subunit">
    <text evidence="1">Homotetramer.</text>
</comment>
<comment type="subcellular location">
    <subcellularLocation>
        <location evidence="1">Cytoplasm</location>
    </subcellularLocation>
</comment>
<comment type="similarity">
    <text evidence="1">Belongs to the thymidine kinase family.</text>
</comment>
<comment type="sequence caution" evidence="2">
    <conflict type="erroneous initiation">
        <sequence resource="EMBL-CDS" id="AAV42633"/>
    </conflict>
</comment>
<protein>
    <recommendedName>
        <fullName evidence="1">Thymidine kinase</fullName>
        <ecNumber evidence="1">2.7.1.21</ecNumber>
    </recommendedName>
</protein>
<proteinExistence type="inferred from homology"/>
<organism>
    <name type="scientific">Lactobacillus acidophilus (strain ATCC 700396 / NCK56 / N2 / NCFM)</name>
    <dbReference type="NCBI Taxonomy" id="272621"/>
    <lineage>
        <taxon>Bacteria</taxon>
        <taxon>Bacillati</taxon>
        <taxon>Bacillota</taxon>
        <taxon>Bacilli</taxon>
        <taxon>Lactobacillales</taxon>
        <taxon>Lactobacillaceae</taxon>
        <taxon>Lactobacillus</taxon>
    </lineage>
</organism>
<evidence type="ECO:0000255" key="1">
    <source>
        <dbReference type="HAMAP-Rule" id="MF_00124"/>
    </source>
</evidence>
<evidence type="ECO:0000305" key="2"/>
<accession>Q5FKZ1</accession>
<feature type="chain" id="PRO_0000174981" description="Thymidine kinase">
    <location>
        <begin position="1"/>
        <end position="199"/>
    </location>
</feature>
<feature type="active site" description="Proton acceptor" evidence="1">
    <location>
        <position position="94"/>
    </location>
</feature>
<feature type="binding site" evidence="1">
    <location>
        <begin position="9"/>
        <end position="16"/>
    </location>
    <ligand>
        <name>ATP</name>
        <dbReference type="ChEBI" id="CHEBI:30616"/>
    </ligand>
</feature>
<feature type="binding site" evidence="1">
    <location>
        <begin position="93"/>
        <end position="96"/>
    </location>
    <ligand>
        <name>ATP</name>
        <dbReference type="ChEBI" id="CHEBI:30616"/>
    </ligand>
</feature>
<feature type="binding site" evidence="1">
    <location>
        <position position="151"/>
    </location>
    <ligand>
        <name>Zn(2+)</name>
        <dbReference type="ChEBI" id="CHEBI:29105"/>
    </ligand>
</feature>
<feature type="binding site" evidence="1">
    <location>
        <position position="154"/>
    </location>
    <ligand>
        <name>Zn(2+)</name>
        <dbReference type="ChEBI" id="CHEBI:29105"/>
    </ligand>
</feature>
<feature type="binding site" evidence="1">
    <location>
        <position position="188"/>
    </location>
    <ligand>
        <name>Zn(2+)</name>
        <dbReference type="ChEBI" id="CHEBI:29105"/>
    </ligand>
</feature>
<feature type="binding site" evidence="1">
    <location>
        <position position="191"/>
    </location>
    <ligand>
        <name>Zn(2+)</name>
        <dbReference type="ChEBI" id="CHEBI:29105"/>
    </ligand>
</feature>
<keyword id="KW-0067">ATP-binding</keyword>
<keyword id="KW-0963">Cytoplasm</keyword>
<keyword id="KW-0237">DNA synthesis</keyword>
<keyword id="KW-0418">Kinase</keyword>
<keyword id="KW-0479">Metal-binding</keyword>
<keyword id="KW-0547">Nucleotide-binding</keyword>
<keyword id="KW-1185">Reference proteome</keyword>
<keyword id="KW-0808">Transferase</keyword>
<keyword id="KW-0862">Zinc</keyword>
<name>KITH_LACAC</name>
<reference key="1">
    <citation type="journal article" date="2005" name="Proc. Natl. Acad. Sci. U.S.A.">
        <title>Complete genome sequence of the probiotic lactic acid bacterium Lactobacillus acidophilus NCFM.</title>
        <authorList>
            <person name="Altermann E."/>
            <person name="Russell W.M."/>
            <person name="Azcarate-Peril M.A."/>
            <person name="Barrangou R."/>
            <person name="Buck B.L."/>
            <person name="McAuliffe O."/>
            <person name="Souther N."/>
            <person name="Dobson A."/>
            <person name="Duong T."/>
            <person name="Callanan M."/>
            <person name="Lick S."/>
            <person name="Hamrick A."/>
            <person name="Cano R."/>
            <person name="Klaenhammer T.R."/>
        </authorList>
    </citation>
    <scope>NUCLEOTIDE SEQUENCE [LARGE SCALE GENOMIC DNA]</scope>
    <source>
        <strain>ATCC 700396 / NCK56 / N2 / NCFM</strain>
    </source>
</reference>
<gene>
    <name evidence="1" type="primary">tdk</name>
    <name type="ordered locus">LBA0766</name>
</gene>
<dbReference type="EC" id="2.7.1.21" evidence="1"/>
<dbReference type="EMBL" id="CP000033">
    <property type="protein sequence ID" value="AAV42633.1"/>
    <property type="status" value="ALT_INIT"/>
    <property type="molecule type" value="Genomic_DNA"/>
</dbReference>
<dbReference type="RefSeq" id="WP_015613340.1">
    <property type="nucleotide sequence ID" value="NC_006814.3"/>
</dbReference>
<dbReference type="RefSeq" id="YP_193664.1">
    <property type="nucleotide sequence ID" value="NC_006814.3"/>
</dbReference>
<dbReference type="SMR" id="Q5FKZ1"/>
<dbReference type="STRING" id="272621.LBA0766"/>
<dbReference type="KEGG" id="lac:LBA0766"/>
<dbReference type="PATRIC" id="fig|272621.13.peg.729"/>
<dbReference type="eggNOG" id="COG1435">
    <property type="taxonomic scope" value="Bacteria"/>
</dbReference>
<dbReference type="HOGENOM" id="CLU_064400_2_2_9"/>
<dbReference type="OrthoDB" id="9781579at2"/>
<dbReference type="Proteomes" id="UP000006381">
    <property type="component" value="Chromosome"/>
</dbReference>
<dbReference type="GO" id="GO:0005829">
    <property type="term" value="C:cytosol"/>
    <property type="evidence" value="ECO:0007669"/>
    <property type="project" value="TreeGrafter"/>
</dbReference>
<dbReference type="GO" id="GO:0005524">
    <property type="term" value="F:ATP binding"/>
    <property type="evidence" value="ECO:0007669"/>
    <property type="project" value="UniProtKB-UniRule"/>
</dbReference>
<dbReference type="GO" id="GO:0004797">
    <property type="term" value="F:thymidine kinase activity"/>
    <property type="evidence" value="ECO:0007669"/>
    <property type="project" value="UniProtKB-UniRule"/>
</dbReference>
<dbReference type="GO" id="GO:0008270">
    <property type="term" value="F:zinc ion binding"/>
    <property type="evidence" value="ECO:0007669"/>
    <property type="project" value="UniProtKB-UniRule"/>
</dbReference>
<dbReference type="GO" id="GO:0071897">
    <property type="term" value="P:DNA biosynthetic process"/>
    <property type="evidence" value="ECO:0007669"/>
    <property type="project" value="UniProtKB-KW"/>
</dbReference>
<dbReference type="GO" id="GO:0046104">
    <property type="term" value="P:thymidine metabolic process"/>
    <property type="evidence" value="ECO:0007669"/>
    <property type="project" value="TreeGrafter"/>
</dbReference>
<dbReference type="Gene3D" id="3.30.60.20">
    <property type="match status" value="1"/>
</dbReference>
<dbReference type="Gene3D" id="3.40.50.300">
    <property type="entry name" value="P-loop containing nucleotide triphosphate hydrolases"/>
    <property type="match status" value="1"/>
</dbReference>
<dbReference type="HAMAP" id="MF_00124">
    <property type="entry name" value="Thymidine_kinase"/>
    <property type="match status" value="1"/>
</dbReference>
<dbReference type="InterPro" id="IPR027417">
    <property type="entry name" value="P-loop_NTPase"/>
</dbReference>
<dbReference type="InterPro" id="IPR001267">
    <property type="entry name" value="Thymidine_kinase"/>
</dbReference>
<dbReference type="InterPro" id="IPR020633">
    <property type="entry name" value="Thymidine_kinase_CS"/>
</dbReference>
<dbReference type="NCBIfam" id="NF003299">
    <property type="entry name" value="PRK04296.1-4"/>
    <property type="match status" value="1"/>
</dbReference>
<dbReference type="NCBIfam" id="NF003300">
    <property type="entry name" value="PRK04296.1-5"/>
    <property type="match status" value="1"/>
</dbReference>
<dbReference type="PANTHER" id="PTHR11441">
    <property type="entry name" value="THYMIDINE KINASE"/>
    <property type="match status" value="1"/>
</dbReference>
<dbReference type="PANTHER" id="PTHR11441:SF0">
    <property type="entry name" value="THYMIDINE KINASE, CYTOSOLIC"/>
    <property type="match status" value="1"/>
</dbReference>
<dbReference type="Pfam" id="PF00265">
    <property type="entry name" value="TK"/>
    <property type="match status" value="1"/>
</dbReference>
<dbReference type="PIRSF" id="PIRSF035805">
    <property type="entry name" value="TK_cell"/>
    <property type="match status" value="1"/>
</dbReference>
<dbReference type="SUPFAM" id="SSF57716">
    <property type="entry name" value="Glucocorticoid receptor-like (DNA-binding domain)"/>
    <property type="match status" value="1"/>
</dbReference>
<dbReference type="SUPFAM" id="SSF52540">
    <property type="entry name" value="P-loop containing nucleoside triphosphate hydrolases"/>
    <property type="match status" value="1"/>
</dbReference>
<dbReference type="PROSITE" id="PS00603">
    <property type="entry name" value="TK_CELLULAR_TYPE"/>
    <property type="match status" value="1"/>
</dbReference>
<sequence>MAQLFFRYGAMSSGKTIEILKVAHNYEAQGRKIALMTSGLDNRSGVGTVASRIGIHRKAIPITEEMDLFEYIKEMNNHDLADGDGKLACVLIDEAQFLKRHHVLECAKIVDEFNIPVMTFGLKNDFQNHLFEGSENLLIFADKIEEMKTICHYCGHKATMNLRINNGKPVYEGEQVQIGGDESYYPVCRYHYFHPNVVR</sequence>